<proteinExistence type="evidence at protein level"/>
<sequence>MEMMIKKRIKQVKKGDQDAFADIVDIYKDKIYQLCYRMLGNVHEAEDIAQEAFIRAYVNIDSFDINRKFSTWLYRIATNLTIDRIRKKKPDYYLDAEVAGTEGLTMYSQIVADGVLPEDAVVSLELSNTIQQKILKLPDKYRTVIVLKYIDELSLIEIGEILNIPVGTVKTRIHRGREALRKQLRDL</sequence>
<reference key="1">
    <citation type="journal article" date="1997" name="Microbiology">
        <title>Sequence and analysis of a 31 kb segment of the Bacillus subtilis chromosome in the area of the rrnH and rrnG operons.</title>
        <authorList>
            <person name="Liu H."/>
            <person name="Haga K."/>
            <person name="Yasumoto K."/>
            <person name="Ohashi Y."/>
            <person name="Yoshikawa H."/>
            <person name="Takahashi H."/>
        </authorList>
    </citation>
    <scope>NUCLEOTIDE SEQUENCE [GENOMIC DNA]</scope>
    <source>
        <strain>168</strain>
    </source>
</reference>
<reference key="2">
    <citation type="journal article" date="1997" name="Nature">
        <title>The complete genome sequence of the Gram-positive bacterium Bacillus subtilis.</title>
        <authorList>
            <person name="Kunst F."/>
            <person name="Ogasawara N."/>
            <person name="Moszer I."/>
            <person name="Albertini A.M."/>
            <person name="Alloni G."/>
            <person name="Azevedo V."/>
            <person name="Bertero M.G."/>
            <person name="Bessieres P."/>
            <person name="Bolotin A."/>
            <person name="Borchert S."/>
            <person name="Borriss R."/>
            <person name="Boursier L."/>
            <person name="Brans A."/>
            <person name="Braun M."/>
            <person name="Brignell S.C."/>
            <person name="Bron S."/>
            <person name="Brouillet S."/>
            <person name="Bruschi C.V."/>
            <person name="Caldwell B."/>
            <person name="Capuano V."/>
            <person name="Carter N.M."/>
            <person name="Choi S.-K."/>
            <person name="Codani J.-J."/>
            <person name="Connerton I.F."/>
            <person name="Cummings N.J."/>
            <person name="Daniel R.A."/>
            <person name="Denizot F."/>
            <person name="Devine K.M."/>
            <person name="Duesterhoeft A."/>
            <person name="Ehrlich S.D."/>
            <person name="Emmerson P.T."/>
            <person name="Entian K.-D."/>
            <person name="Errington J."/>
            <person name="Fabret C."/>
            <person name="Ferrari E."/>
            <person name="Foulger D."/>
            <person name="Fritz C."/>
            <person name="Fujita M."/>
            <person name="Fujita Y."/>
            <person name="Fuma S."/>
            <person name="Galizzi A."/>
            <person name="Galleron N."/>
            <person name="Ghim S.-Y."/>
            <person name="Glaser P."/>
            <person name="Goffeau A."/>
            <person name="Golightly E.J."/>
            <person name="Grandi G."/>
            <person name="Guiseppi G."/>
            <person name="Guy B.J."/>
            <person name="Haga K."/>
            <person name="Haiech J."/>
            <person name="Harwood C.R."/>
            <person name="Henaut A."/>
            <person name="Hilbert H."/>
            <person name="Holsappel S."/>
            <person name="Hosono S."/>
            <person name="Hullo M.-F."/>
            <person name="Itaya M."/>
            <person name="Jones L.-M."/>
            <person name="Joris B."/>
            <person name="Karamata D."/>
            <person name="Kasahara Y."/>
            <person name="Klaerr-Blanchard M."/>
            <person name="Klein C."/>
            <person name="Kobayashi Y."/>
            <person name="Koetter P."/>
            <person name="Koningstein G."/>
            <person name="Krogh S."/>
            <person name="Kumano M."/>
            <person name="Kurita K."/>
            <person name="Lapidus A."/>
            <person name="Lardinois S."/>
            <person name="Lauber J."/>
            <person name="Lazarevic V."/>
            <person name="Lee S.-M."/>
            <person name="Levine A."/>
            <person name="Liu H."/>
            <person name="Masuda S."/>
            <person name="Mauel C."/>
            <person name="Medigue C."/>
            <person name="Medina N."/>
            <person name="Mellado R.P."/>
            <person name="Mizuno M."/>
            <person name="Moestl D."/>
            <person name="Nakai S."/>
            <person name="Noback M."/>
            <person name="Noone D."/>
            <person name="O'Reilly M."/>
            <person name="Ogawa K."/>
            <person name="Ogiwara A."/>
            <person name="Oudega B."/>
            <person name="Park S.-H."/>
            <person name="Parro V."/>
            <person name="Pohl T.M."/>
            <person name="Portetelle D."/>
            <person name="Porwollik S."/>
            <person name="Prescott A.M."/>
            <person name="Presecan E."/>
            <person name="Pujic P."/>
            <person name="Purnelle B."/>
            <person name="Rapoport G."/>
            <person name="Rey M."/>
            <person name="Reynolds S."/>
            <person name="Rieger M."/>
            <person name="Rivolta C."/>
            <person name="Rocha E."/>
            <person name="Roche B."/>
            <person name="Rose M."/>
            <person name="Sadaie Y."/>
            <person name="Sato T."/>
            <person name="Scanlan E."/>
            <person name="Schleich S."/>
            <person name="Schroeter R."/>
            <person name="Scoffone F."/>
            <person name="Sekiguchi J."/>
            <person name="Sekowska A."/>
            <person name="Seror S.J."/>
            <person name="Serror P."/>
            <person name="Shin B.-S."/>
            <person name="Soldo B."/>
            <person name="Sorokin A."/>
            <person name="Tacconi E."/>
            <person name="Takagi T."/>
            <person name="Takahashi H."/>
            <person name="Takemaru K."/>
            <person name="Takeuchi M."/>
            <person name="Tamakoshi A."/>
            <person name="Tanaka T."/>
            <person name="Terpstra P."/>
            <person name="Tognoni A."/>
            <person name="Tosato V."/>
            <person name="Uchiyama S."/>
            <person name="Vandenbol M."/>
            <person name="Vannier F."/>
            <person name="Vassarotti A."/>
            <person name="Viari A."/>
            <person name="Wambutt R."/>
            <person name="Wedler E."/>
            <person name="Wedler H."/>
            <person name="Weitzenegger T."/>
            <person name="Winters P."/>
            <person name="Wipat A."/>
            <person name="Yamamoto H."/>
            <person name="Yamane K."/>
            <person name="Yasumoto K."/>
            <person name="Yata K."/>
            <person name="Yoshida K."/>
            <person name="Yoshikawa H.-F."/>
            <person name="Zumstein E."/>
            <person name="Yoshikawa H."/>
            <person name="Danchin A."/>
        </authorList>
    </citation>
    <scope>NUCLEOTIDE SEQUENCE [LARGE SCALE GENOMIC DNA]</scope>
    <source>
        <strain>168</strain>
    </source>
</reference>
<reference key="3">
    <citation type="journal article" date="2001" name="J. Bacteriol.">
        <title>Global analysis of the general stress response of Bacillus subtilis.</title>
        <authorList>
            <person name="Petersohn A."/>
            <person name="Brigulla M."/>
            <person name="Haas S."/>
            <person name="Hoheisel J.D."/>
            <person name="Voelker U."/>
            <person name="Hecker M."/>
        </authorList>
    </citation>
    <scope>INDUCTION</scope>
</reference>
<reference key="4">
    <citation type="journal article" date="2001" name="Mol. Microbiol.">
        <title>Alkaline shock induces the Bacillus subtilis sigma(W) regulon.</title>
        <authorList>
            <person name="Wiegert T."/>
            <person name="Homuth G."/>
            <person name="Versteeg S."/>
            <person name="Schumann W."/>
        </authorList>
    </citation>
    <scope>FUNCTION</scope>
    <scope>REGULON</scope>
    <scope>INDUCTION</scope>
    <scope>DISRUPTION PHENOTYPE</scope>
    <source>
        <strain>168</strain>
    </source>
</reference>
<reference key="5">
    <citation type="journal article" date="2002" name="Mol. Microbiol.">
        <title>Antibiotics that inhibit cell wall biosynthesis induce expression of the Bacillus subtilis sigma(W) and sigma(M) regulons.</title>
        <authorList>
            <person name="Cao M."/>
            <person name="Wang T."/>
            <person name="Ye R."/>
            <person name="Helmann J.D."/>
        </authorList>
    </citation>
    <scope>FUNCTION</scope>
    <scope>INDUCTION</scope>
</reference>
<reference key="6">
    <citation type="journal article" date="2004" name="Mol. Microbiol.">
        <title>The Bacillus subtilis sigmaW anti-sigma factor RsiW is degraded by intramembrane proteolysis through YluC.</title>
        <authorList>
            <person name="Schoebel S."/>
            <person name="Zellmeier S."/>
            <person name="Schumann W."/>
            <person name="Wiegert T."/>
        </authorList>
    </citation>
    <scope>ACTIVITY REGULATION</scope>
</reference>
<reference key="7">
    <citation type="journal article" date="2005" name="Microbiology">
        <title>Cationic antimicrobial peptides elicit a complex stress response in Bacillus subtilis that involves ECF-type sigma factors and two-component signal transduction systems.</title>
        <authorList>
            <person name="Pietiaeinen M."/>
            <person name="Gardemeister M."/>
            <person name="Mecklin M."/>
            <person name="Leskelae S."/>
            <person name="Sarvas M."/>
            <person name="Kontinen V.P."/>
        </authorList>
    </citation>
    <scope>FUNCTION</scope>
    <scope>INDUCTION</scope>
</reference>
<reference key="8">
    <citation type="journal article" date="2006" name="Genes Dev.">
        <title>Evidence for a novel protease governing regulated intramembrane proteolysis and resistance to antimicrobial peptides in Bacillus subtilis.</title>
        <authorList>
            <person name="Ellermeier C.D."/>
            <person name="Losick R."/>
        </authorList>
    </citation>
    <scope>ACTIVITY REGULATION</scope>
</reference>
<reference key="9">
    <citation type="journal article" date="2006" name="Mol. Microbiol.">
        <title>Involvement of Clp protease activity in modulating the Bacillus subtilis sigma-W stress response.</title>
        <authorList>
            <person name="Zellmeier S."/>
            <person name="Schumann W."/>
            <person name="Wiegert T."/>
        </authorList>
    </citation>
    <scope>ACTIVITY REGULATION</scope>
</reference>
<reference key="10">
    <citation type="journal article" date="2011" name="Nucleic Acids Res.">
        <title>Determinants of redox sensitivity in RsrA, a zinc-containing anti-sigma factor for regulating thiol oxidative stress response.</title>
        <authorList>
            <person name="Jung Y.G."/>
            <person name="Cho Y.B."/>
            <person name="Kim M.S."/>
            <person name="Yoo J.S."/>
            <person name="Hong S.H."/>
            <person name="Roe J.H."/>
        </authorList>
    </citation>
    <scope>FUNCTION AS A SIGMA FACTOR</scope>
    <scope>INDUCTION</scope>
</reference>
<reference key="11">
    <citation type="journal article" date="2011" name="Proteomics">
        <title>The dynamic protein partnership of RNA polymerase in Bacillus subtilis.</title>
        <authorList>
            <person name="Delumeau O."/>
            <person name="Lecointe F."/>
            <person name="Muntel J."/>
            <person name="Guillot A."/>
            <person name="Guedon E."/>
            <person name="Monnet V."/>
            <person name="Hecker M."/>
            <person name="Becher D."/>
            <person name="Polard P."/>
            <person name="Noirot P."/>
        </authorList>
    </citation>
    <scope>FUNCTION</scope>
    <scope>SUBUNIT</scope>
    <scope>INDUCTION</scope>
    <source>
        <strain>168</strain>
    </source>
</reference>
<reference evidence="15 16" key="12">
    <citation type="journal article" date="2017" name="PLoS ONE">
        <title>Structural insights into the regulation of Bacillus subtilis SigW activity by anti-sigma RsiW.</title>
        <authorList>
            <person name="Devkota S.R."/>
            <person name="Kwon E."/>
            <person name="Ha S.C."/>
            <person name="Chang H.W."/>
            <person name="Kim D.Y."/>
        </authorList>
    </citation>
    <scope>X-RAY CRYSTALLOGRAPHY (2.80 ANGSTROMS) IN COMPLEX WITH REDUCED AND OXIDZED SIGW</scope>
    <scope>SUBUNIT</scope>
    <scope>DOMAIN</scope>
    <source>
        <strain>168</strain>
    </source>
</reference>
<organism>
    <name type="scientific">Bacillus subtilis (strain 168)</name>
    <dbReference type="NCBI Taxonomy" id="224308"/>
    <lineage>
        <taxon>Bacteria</taxon>
        <taxon>Bacillati</taxon>
        <taxon>Bacillota</taxon>
        <taxon>Bacilli</taxon>
        <taxon>Bacillales</taxon>
        <taxon>Bacillaceae</taxon>
        <taxon>Bacillus</taxon>
    </lineage>
</organism>
<name>SIGW_BACSU</name>
<feature type="chain" id="PRO_0000094016" description="ECF RNA polymerase sigma factor SigW">
    <location>
        <begin position="1"/>
        <end position="187"/>
    </location>
</feature>
<feature type="DNA-binding region" description="H-T-H motif" evidence="14">
    <location>
        <begin position="166"/>
        <end position="184"/>
    </location>
</feature>
<feature type="region of interest" description="Sigma-70 factor domain-2" evidence="14">
    <location>
        <begin position="3"/>
        <end position="95"/>
    </location>
</feature>
<feature type="region of interest" description="Sigma-70 factor domain-4" evidence="14">
    <location>
        <begin position="125"/>
        <end position="187"/>
    </location>
</feature>
<feature type="short sequence motif" description="Polymerase core binding">
    <location>
        <begin position="47"/>
        <end position="50"/>
    </location>
</feature>
<feature type="helix" evidence="17">
    <location>
        <begin position="3"/>
        <end position="13"/>
    </location>
</feature>
<feature type="helix" evidence="17">
    <location>
        <begin position="17"/>
        <end position="39"/>
    </location>
</feature>
<feature type="helix" evidence="17">
    <location>
        <begin position="42"/>
        <end position="58"/>
    </location>
</feature>
<feature type="helix" evidence="17">
    <location>
        <begin position="60"/>
        <end position="62"/>
    </location>
</feature>
<feature type="helix" evidence="17">
    <location>
        <begin position="69"/>
        <end position="88"/>
    </location>
</feature>
<feature type="helix" evidence="17">
    <location>
        <begin position="92"/>
        <end position="94"/>
    </location>
</feature>
<feature type="helix" evidence="17">
    <location>
        <begin position="126"/>
        <end position="135"/>
    </location>
</feature>
<feature type="helix" evidence="17">
    <location>
        <begin position="139"/>
        <end position="149"/>
    </location>
</feature>
<feature type="helix" evidence="17">
    <location>
        <begin position="155"/>
        <end position="162"/>
    </location>
</feature>
<feature type="helix" evidence="17">
    <location>
        <begin position="166"/>
        <end position="184"/>
    </location>
</feature>
<keyword id="KW-0002">3D-structure</keyword>
<keyword id="KW-0238">DNA-binding</keyword>
<keyword id="KW-1185">Reference proteome</keyword>
<keyword id="KW-0731">Sigma factor</keyword>
<keyword id="KW-0346">Stress response</keyword>
<keyword id="KW-0804">Transcription</keyword>
<keyword id="KW-0805">Transcription regulation</keyword>
<evidence type="ECO:0000250" key="1">
    <source>
        <dbReference type="UniProtKB" id="P0AGB6"/>
    </source>
</evidence>
<evidence type="ECO:0000269" key="2">
    <source>
    </source>
</evidence>
<evidence type="ECO:0000269" key="3">
    <source>
    </source>
</evidence>
<evidence type="ECO:0000269" key="4">
    <source>
    </source>
</evidence>
<evidence type="ECO:0000269" key="5">
    <source>
    </source>
</evidence>
<evidence type="ECO:0000269" key="6">
    <source>
    </source>
</evidence>
<evidence type="ECO:0000269" key="7">
    <source>
    </source>
</evidence>
<evidence type="ECO:0000269" key="8">
    <source>
    </source>
</evidence>
<evidence type="ECO:0000269" key="9">
    <source>
    </source>
</evidence>
<evidence type="ECO:0000269" key="10">
    <source>
    </source>
</evidence>
<evidence type="ECO:0000269" key="11">
    <source>
    </source>
</evidence>
<evidence type="ECO:0000305" key="12"/>
<evidence type="ECO:0000305" key="13">
    <source>
    </source>
</evidence>
<evidence type="ECO:0000305" key="14">
    <source>
    </source>
</evidence>
<evidence type="ECO:0007744" key="15">
    <source>
        <dbReference type="PDB" id="5WUQ"/>
    </source>
</evidence>
<evidence type="ECO:0007744" key="16">
    <source>
        <dbReference type="PDB" id="5WUR"/>
    </source>
</evidence>
<evidence type="ECO:0007829" key="17">
    <source>
        <dbReference type="PDB" id="5WUR"/>
    </source>
</evidence>
<dbReference type="EMBL" id="AB002150">
    <property type="protein sequence ID" value="BAA19507.1"/>
    <property type="molecule type" value="Genomic_DNA"/>
</dbReference>
<dbReference type="EMBL" id="AL009126">
    <property type="protein sequence ID" value="CAB11949.1"/>
    <property type="molecule type" value="Genomic_DNA"/>
</dbReference>
<dbReference type="PIR" id="H69706">
    <property type="entry name" value="H69706"/>
</dbReference>
<dbReference type="RefSeq" id="NP_388054.1">
    <property type="nucleotide sequence ID" value="NC_000964.3"/>
</dbReference>
<dbReference type="RefSeq" id="WP_003234958.1">
    <property type="nucleotide sequence ID" value="NZ_OZ025638.1"/>
</dbReference>
<dbReference type="PDB" id="5OR5">
    <property type="method" value="NMR"/>
    <property type="chains" value="A=64-69"/>
</dbReference>
<dbReference type="PDB" id="5WUQ">
    <property type="method" value="X-ray"/>
    <property type="resolution" value="2.80 A"/>
    <property type="chains" value="A/B=1-187"/>
</dbReference>
<dbReference type="PDB" id="5WUR">
    <property type="method" value="X-ray"/>
    <property type="resolution" value="2.60 A"/>
    <property type="chains" value="A/B=1-187"/>
</dbReference>
<dbReference type="PDB" id="6JHE">
    <property type="method" value="X-ray"/>
    <property type="resolution" value="3.10 A"/>
    <property type="chains" value="A=126-187"/>
</dbReference>
<dbReference type="PDBsum" id="5OR5"/>
<dbReference type="PDBsum" id="5WUQ"/>
<dbReference type="PDBsum" id="5WUR"/>
<dbReference type="PDBsum" id="6JHE"/>
<dbReference type="SMR" id="Q45585"/>
<dbReference type="FunCoup" id="Q45585">
    <property type="interactions" value="360"/>
</dbReference>
<dbReference type="IntAct" id="Q45585">
    <property type="interactions" value="2"/>
</dbReference>
<dbReference type="STRING" id="224308.BSU01730"/>
<dbReference type="PaxDb" id="224308-BSU01730"/>
<dbReference type="EnsemblBacteria" id="CAB11949">
    <property type="protein sequence ID" value="CAB11949"/>
    <property type="gene ID" value="BSU_01730"/>
</dbReference>
<dbReference type="GeneID" id="938868"/>
<dbReference type="KEGG" id="bsu:BSU01730"/>
<dbReference type="PATRIC" id="fig|224308.179.peg.179"/>
<dbReference type="eggNOG" id="COG1595">
    <property type="taxonomic scope" value="Bacteria"/>
</dbReference>
<dbReference type="InParanoid" id="Q45585"/>
<dbReference type="OrthoDB" id="9785675at2"/>
<dbReference type="PhylomeDB" id="Q45585"/>
<dbReference type="BioCyc" id="BSUB:BSU01730-MONOMER"/>
<dbReference type="Proteomes" id="UP000001570">
    <property type="component" value="Chromosome"/>
</dbReference>
<dbReference type="GO" id="GO:0003677">
    <property type="term" value="F:DNA binding"/>
    <property type="evidence" value="ECO:0007669"/>
    <property type="project" value="UniProtKB-KW"/>
</dbReference>
<dbReference type="GO" id="GO:0016987">
    <property type="term" value="F:sigma factor activity"/>
    <property type="evidence" value="ECO:0000318"/>
    <property type="project" value="GO_Central"/>
</dbReference>
<dbReference type="GO" id="GO:0006352">
    <property type="term" value="P:DNA-templated transcription initiation"/>
    <property type="evidence" value="ECO:0007669"/>
    <property type="project" value="InterPro"/>
</dbReference>
<dbReference type="GO" id="GO:0006355">
    <property type="term" value="P:regulation of DNA-templated transcription"/>
    <property type="evidence" value="ECO:0000318"/>
    <property type="project" value="GO_Central"/>
</dbReference>
<dbReference type="GO" id="GO:0006950">
    <property type="term" value="P:response to stress"/>
    <property type="evidence" value="ECO:0007669"/>
    <property type="project" value="UniProtKB-ARBA"/>
</dbReference>
<dbReference type="CDD" id="cd06171">
    <property type="entry name" value="Sigma70_r4"/>
    <property type="match status" value="1"/>
</dbReference>
<dbReference type="Gene3D" id="1.10.1740.10">
    <property type="match status" value="1"/>
</dbReference>
<dbReference type="Gene3D" id="1.10.10.10">
    <property type="entry name" value="Winged helix-like DNA-binding domain superfamily/Winged helix DNA-binding domain"/>
    <property type="match status" value="1"/>
</dbReference>
<dbReference type="InterPro" id="IPR039425">
    <property type="entry name" value="RNA_pol_sigma-70-like"/>
</dbReference>
<dbReference type="InterPro" id="IPR014284">
    <property type="entry name" value="RNA_pol_sigma-70_dom"/>
</dbReference>
<dbReference type="InterPro" id="IPR014294">
    <property type="entry name" value="RNA_pol_sigma-W_bacilli"/>
</dbReference>
<dbReference type="InterPro" id="IPR000838">
    <property type="entry name" value="RNA_pol_sigma70_ECF_CS"/>
</dbReference>
<dbReference type="InterPro" id="IPR007627">
    <property type="entry name" value="RNA_pol_sigma70_r2"/>
</dbReference>
<dbReference type="InterPro" id="IPR013249">
    <property type="entry name" value="RNA_pol_sigma70_r4_t2"/>
</dbReference>
<dbReference type="InterPro" id="IPR013325">
    <property type="entry name" value="RNA_pol_sigma_r2"/>
</dbReference>
<dbReference type="InterPro" id="IPR013324">
    <property type="entry name" value="RNA_pol_sigma_r3/r4-like"/>
</dbReference>
<dbReference type="InterPro" id="IPR036388">
    <property type="entry name" value="WH-like_DNA-bd_sf"/>
</dbReference>
<dbReference type="NCBIfam" id="NF007223">
    <property type="entry name" value="PRK09641.1"/>
    <property type="match status" value="1"/>
</dbReference>
<dbReference type="NCBIfam" id="TIGR02937">
    <property type="entry name" value="sigma70-ECF"/>
    <property type="match status" value="1"/>
</dbReference>
<dbReference type="NCBIfam" id="TIGR02948">
    <property type="entry name" value="SigW_bacill"/>
    <property type="match status" value="1"/>
</dbReference>
<dbReference type="PANTHER" id="PTHR43133">
    <property type="entry name" value="RNA POLYMERASE ECF-TYPE SIGMA FACTO"/>
    <property type="match status" value="1"/>
</dbReference>
<dbReference type="PANTHER" id="PTHR43133:SF60">
    <property type="entry name" value="RNA POLYMERASE SIGMA FACTOR SIGV"/>
    <property type="match status" value="1"/>
</dbReference>
<dbReference type="Pfam" id="PF04542">
    <property type="entry name" value="Sigma70_r2"/>
    <property type="match status" value="1"/>
</dbReference>
<dbReference type="Pfam" id="PF08281">
    <property type="entry name" value="Sigma70_r4_2"/>
    <property type="match status" value="1"/>
</dbReference>
<dbReference type="SUPFAM" id="SSF88946">
    <property type="entry name" value="Sigma2 domain of RNA polymerase sigma factors"/>
    <property type="match status" value="1"/>
</dbReference>
<dbReference type="SUPFAM" id="SSF88659">
    <property type="entry name" value="Sigma3 and sigma4 domains of RNA polymerase sigma factors"/>
    <property type="match status" value="1"/>
</dbReference>
<dbReference type="PROSITE" id="PS01063">
    <property type="entry name" value="SIGMA70_ECF"/>
    <property type="match status" value="1"/>
</dbReference>
<protein>
    <recommendedName>
        <fullName>ECF RNA polymerase sigma factor SigW</fullName>
        <shortName>ECF sigma factor SigW</shortName>
    </recommendedName>
    <alternativeName>
        <fullName>Alternative RNA polymerase sigma factor SigW</fullName>
    </alternativeName>
    <alternativeName>
        <fullName>RNA polymerase sigma-W factor</fullName>
        <shortName>Sigma-W factor</shortName>
    </alternativeName>
</protein>
<gene>
    <name type="primary">sigW</name>
    <name type="synonym">ybbL</name>
    <name type="ordered locus">BSU01730</name>
</gene>
<accession>Q45585</accession>
<accession>O08074</accession>
<comment type="function">
    <text evidence="2 4 6 9 13">Sigma factors are initiation factors that promote the attachment of RNA polymerase (RNAP) to specific initiation sites and are then released. Sigma-W controls genes involved in response to cell envelope stress such as antimicrobial peptides (PubMed:12207695, PubMed:15870467), alkaline pH (PubMed:11454200), transport processes and detoxification.</text>
</comment>
<comment type="activity regulation">
    <text evidence="5 7 8">Extracytoplasmic function (ECF) sigma factors are held in an inactive form by a cognate anti-sigma factor (RsiW for this protein) until released by regulated membrane proteolysis (RIP). RIP occurs when an extracytoplasmic signal (envelope stress) triggers a concerted proteolytic cascade to transmit information and elicit cellular responses. The anti-sigma factor RsiW is a membrane protein, binding sigma-W in the cytoplasm. RsiW is first cut extracytoplasmically (site-1 protease, S1P, by PrsW) (PubMed:16816000), then within the membrane itself (site-2 protease, S2P, by RasP) (PubMed:15130127), while cytoplasmic proteases (predominantly ClpX-ClpP) finish degrading the regulatory protein, liberating sigma-W (PubMed:16899079).</text>
</comment>
<comment type="subunit">
    <text evidence="11 13">Interacts transiently with the RNA polymerase catalytic core formed by RpoA, RpoB, RpoC and RpoZ (2 alpha, 1 beta, 1 beta' and 1 omega subunit) to form the RNA polymerase holoenzyme that can initiate transcription. Forms a heterodimer with cognate anti-sigma factor RsiW, which prevents it from binding to the -10 and -35 promoter elements (PubMed:28319136).</text>
</comment>
<comment type="induction">
    <text evidence="2 3 4 6 9 10">By different stresses causing damage to the cell envelope, such as alkaline shock (PubMed:11454200), salt shock (PubMed:11544224), phage infection and certain antibiotics that affect cell wall biosynthesis (PubMed:12207695, PubMed:15870467). Does not respond to oxidative stress caused by diamide (PubMed:21685450). Association with RNAP core increases during most stresses but not during sporulation (at protein level) (PubMed:21710567).</text>
</comment>
<comment type="domain">
    <text evidence="1 11">The sigma-70 factor domain-2 mediates sequence-specific interaction with the -10 element in promoter DNA (PubMed:28319136), and plays an important role in melting the double-stranded DNA and the formation of the transcription bubble. Also mediates interaction with the RNA polymerase subunits RpoB and RpoC (By similarity).</text>
</comment>
<comment type="domain">
    <text evidence="1 11">The sigma-70 factor domain-4 contains a helix-turn-helix (H-T-H) motif that mediates interaction with the -35 element in promoter DNA (PubMed:28319136). The domain also mediates interaction with the RNA polymerase subunit RpoA (By similarity).</text>
</comment>
<comment type="disruption phenotype">
    <text evidence="2">Alteration (reduction or loss for the most part) of expression of about 60 genes that are high-pH-inducible, including sigW and its anti-sigma factor rsiW (PubMed:11454200).</text>
</comment>
<comment type="similarity">
    <text evidence="12">Belongs to the sigma-70 factor family. ECF subfamily.</text>
</comment>